<comment type="function">
    <text evidence="2 6 7">Transcription activator that recognizes two different DNA motifs: the CCAAT homology common to many promoters and the enhanced core homology common to many enhancers (PubMed:19641492, PubMed:7594592). Important transcription factor regulating the expression of genes involved in immune and inflammatory responses. Transcriptional activator that enhances IL6 transcription alone and as heterodimer with CEBPB (By similarity).</text>
</comment>
<comment type="subunit">
    <text evidence="5 6 7">Binds DNA as a homodimer and as a heterodimer. Can form stable heterodimers with CEBPA, CEBPB and CEBPE (PubMed:1884998). Directly interacts with SPI1/PU.1; this interaction does not affect DNA-binding properties of each partner (PubMed:7594592). Interacts with PRDM16 (PubMed:19641492).</text>
</comment>
<comment type="subcellular location">
    <subcellularLocation>
        <location evidence="10">Nucleus</location>
    </subcellularLocation>
</comment>
<comment type="similarity">
    <text evidence="9">Belongs to the bZIP family. C/EBP subfamily.</text>
</comment>
<accession>Q00322</accession>
<accession>Q3U937</accession>
<accession>Q8BW92</accession>
<sequence length="268" mass="28631">MSAALFSLDSPVRGTPWPTEPAAFYEPGRVDKPGRGPEPGDLGELGSTTPAMYDDESAIDFSAYIDSMAAVPTLELCHDELFADLFNSNHKAAGAGGLELLQGGPTRPPGVGSVARGPLKREPDWGDGDAPGSLLPAQVAVCAQTVVSLAAAAQPTPPTSPEPPRGSPGPSLAPGTVREKGAGKRGPDRGSPEYRQRRERNNIAVRKSRDKAKRRNQEMQQKLVELSAENEKLHQRVEQLTRDLAGLRQFFKKLPSPPFLPPTGADCR</sequence>
<feature type="initiator methionine" description="Removed" evidence="2">
    <location>
        <position position="1"/>
    </location>
</feature>
<feature type="chain" id="PRO_0000076622" description="CCAAT/enhancer-binding protein delta">
    <location>
        <begin position="2"/>
        <end position="268"/>
    </location>
</feature>
<feature type="domain" description="bZIP" evidence="3">
    <location>
        <begin position="191"/>
        <end position="254"/>
    </location>
</feature>
<feature type="region of interest" description="Disordered" evidence="4">
    <location>
        <begin position="1"/>
        <end position="48"/>
    </location>
</feature>
<feature type="region of interest" description="Disordered" evidence="4">
    <location>
        <begin position="97"/>
        <end position="132"/>
    </location>
</feature>
<feature type="region of interest" description="Disordered" evidence="4">
    <location>
        <begin position="152"/>
        <end position="219"/>
    </location>
</feature>
<feature type="region of interest" description="Basic motif" evidence="3">
    <location>
        <begin position="195"/>
        <end position="222"/>
    </location>
</feature>
<feature type="region of interest" description="Leucine-zipper" evidence="3">
    <location>
        <begin position="226"/>
        <end position="254"/>
    </location>
</feature>
<feature type="compositionally biased region" description="Pro residues" evidence="4">
    <location>
        <begin position="155"/>
        <end position="167"/>
    </location>
</feature>
<feature type="compositionally biased region" description="Basic and acidic residues" evidence="4">
    <location>
        <begin position="177"/>
        <end position="201"/>
    </location>
</feature>
<feature type="modified residue" description="N-acetylserine" evidence="2">
    <location>
        <position position="2"/>
    </location>
</feature>
<feature type="cross-link" description="Glycyl lysine isopeptide (Lys-Gly) (interchain with G-Cter in SUMO)" evidence="1">
    <location>
        <position position="120"/>
    </location>
</feature>
<feature type="sequence conflict" description="In Ref. 1; CAA43905." evidence="9" ref="1">
    <original>D</original>
    <variation>E</variation>
    <location>
        <position position="41"/>
    </location>
</feature>
<feature type="sequence conflict" description="In Ref. 3; BAC35305." evidence="9" ref="3">
    <original>PSPP</original>
    <variation>AQPA</variation>
    <location>
        <begin position="255"/>
        <end position="258"/>
    </location>
</feature>
<evidence type="ECO:0000250" key="1"/>
<evidence type="ECO:0000250" key="2">
    <source>
        <dbReference type="UniProtKB" id="P49716"/>
    </source>
</evidence>
<evidence type="ECO:0000255" key="3">
    <source>
        <dbReference type="PROSITE-ProRule" id="PRU00978"/>
    </source>
</evidence>
<evidence type="ECO:0000256" key="4">
    <source>
        <dbReference type="SAM" id="MobiDB-lite"/>
    </source>
</evidence>
<evidence type="ECO:0000269" key="5">
    <source>
    </source>
</evidence>
<evidence type="ECO:0000269" key="6">
    <source>
    </source>
</evidence>
<evidence type="ECO:0000269" key="7">
    <source>
    </source>
</evidence>
<evidence type="ECO:0000303" key="8">
    <source>
    </source>
</evidence>
<evidence type="ECO:0000305" key="9"/>
<evidence type="ECO:0000305" key="10">
    <source>
    </source>
</evidence>
<proteinExistence type="evidence at protein level"/>
<gene>
    <name type="primary">Cebpd</name>
    <name evidence="8" type="synonym">Crp3</name>
</gene>
<reference key="1">
    <citation type="journal article" date="1991" name="Genes Dev.">
        <title>Regulated expression of three C/EBP isoforms during adipose conversion of 3T3-L1 cells.</title>
        <authorList>
            <person name="Cao Z."/>
            <person name="Umek R.M."/>
            <person name="McKnight S.L."/>
        </authorList>
    </citation>
    <scope>NUCLEOTIDE SEQUENCE [MRNA]</scope>
    <source>
        <tissue>Brain</tissue>
    </source>
</reference>
<reference key="2">
    <citation type="journal article" date="1991" name="Genes Dev.">
        <title>A family of C/EBP-related proteins capable of forming covalently linked leucine zipper dimers in vitro.</title>
        <authorList>
            <person name="Williams S.C."/>
            <person name="Cantwell C.A."/>
            <person name="Johnson P.F."/>
        </authorList>
    </citation>
    <scope>NUCLEOTIDE SEQUENCE [GENOMIC DNA]</scope>
    <scope>SUBUNIT</scope>
    <source>
        <tissue>Adipose tissue</tissue>
        <tissue>Lung</tissue>
    </source>
</reference>
<reference key="3">
    <citation type="journal article" date="2005" name="Science">
        <title>The transcriptional landscape of the mammalian genome.</title>
        <authorList>
            <person name="Carninci P."/>
            <person name="Kasukawa T."/>
            <person name="Katayama S."/>
            <person name="Gough J."/>
            <person name="Frith M.C."/>
            <person name="Maeda N."/>
            <person name="Oyama R."/>
            <person name="Ravasi T."/>
            <person name="Lenhard B."/>
            <person name="Wells C."/>
            <person name="Kodzius R."/>
            <person name="Shimokawa K."/>
            <person name="Bajic V.B."/>
            <person name="Brenner S.E."/>
            <person name="Batalov S."/>
            <person name="Forrest A.R."/>
            <person name="Zavolan M."/>
            <person name="Davis M.J."/>
            <person name="Wilming L.G."/>
            <person name="Aidinis V."/>
            <person name="Allen J.E."/>
            <person name="Ambesi-Impiombato A."/>
            <person name="Apweiler R."/>
            <person name="Aturaliya R.N."/>
            <person name="Bailey T.L."/>
            <person name="Bansal M."/>
            <person name="Baxter L."/>
            <person name="Beisel K.W."/>
            <person name="Bersano T."/>
            <person name="Bono H."/>
            <person name="Chalk A.M."/>
            <person name="Chiu K.P."/>
            <person name="Choudhary V."/>
            <person name="Christoffels A."/>
            <person name="Clutterbuck D.R."/>
            <person name="Crowe M.L."/>
            <person name="Dalla E."/>
            <person name="Dalrymple B.P."/>
            <person name="de Bono B."/>
            <person name="Della Gatta G."/>
            <person name="di Bernardo D."/>
            <person name="Down T."/>
            <person name="Engstrom P."/>
            <person name="Fagiolini M."/>
            <person name="Faulkner G."/>
            <person name="Fletcher C.F."/>
            <person name="Fukushima T."/>
            <person name="Furuno M."/>
            <person name="Futaki S."/>
            <person name="Gariboldi M."/>
            <person name="Georgii-Hemming P."/>
            <person name="Gingeras T.R."/>
            <person name="Gojobori T."/>
            <person name="Green R.E."/>
            <person name="Gustincich S."/>
            <person name="Harbers M."/>
            <person name="Hayashi Y."/>
            <person name="Hensch T.K."/>
            <person name="Hirokawa N."/>
            <person name="Hill D."/>
            <person name="Huminiecki L."/>
            <person name="Iacono M."/>
            <person name="Ikeo K."/>
            <person name="Iwama A."/>
            <person name="Ishikawa T."/>
            <person name="Jakt M."/>
            <person name="Kanapin A."/>
            <person name="Katoh M."/>
            <person name="Kawasawa Y."/>
            <person name="Kelso J."/>
            <person name="Kitamura H."/>
            <person name="Kitano H."/>
            <person name="Kollias G."/>
            <person name="Krishnan S.P."/>
            <person name="Kruger A."/>
            <person name="Kummerfeld S.K."/>
            <person name="Kurochkin I.V."/>
            <person name="Lareau L.F."/>
            <person name="Lazarevic D."/>
            <person name="Lipovich L."/>
            <person name="Liu J."/>
            <person name="Liuni S."/>
            <person name="McWilliam S."/>
            <person name="Madan Babu M."/>
            <person name="Madera M."/>
            <person name="Marchionni L."/>
            <person name="Matsuda H."/>
            <person name="Matsuzawa S."/>
            <person name="Miki H."/>
            <person name="Mignone F."/>
            <person name="Miyake S."/>
            <person name="Morris K."/>
            <person name="Mottagui-Tabar S."/>
            <person name="Mulder N."/>
            <person name="Nakano N."/>
            <person name="Nakauchi H."/>
            <person name="Ng P."/>
            <person name="Nilsson R."/>
            <person name="Nishiguchi S."/>
            <person name="Nishikawa S."/>
            <person name="Nori F."/>
            <person name="Ohara O."/>
            <person name="Okazaki Y."/>
            <person name="Orlando V."/>
            <person name="Pang K.C."/>
            <person name="Pavan W.J."/>
            <person name="Pavesi G."/>
            <person name="Pesole G."/>
            <person name="Petrovsky N."/>
            <person name="Piazza S."/>
            <person name="Reed J."/>
            <person name="Reid J.F."/>
            <person name="Ring B.Z."/>
            <person name="Ringwald M."/>
            <person name="Rost B."/>
            <person name="Ruan Y."/>
            <person name="Salzberg S.L."/>
            <person name="Sandelin A."/>
            <person name="Schneider C."/>
            <person name="Schoenbach C."/>
            <person name="Sekiguchi K."/>
            <person name="Semple C.A."/>
            <person name="Seno S."/>
            <person name="Sessa L."/>
            <person name="Sheng Y."/>
            <person name="Shibata Y."/>
            <person name="Shimada H."/>
            <person name="Shimada K."/>
            <person name="Silva D."/>
            <person name="Sinclair B."/>
            <person name="Sperling S."/>
            <person name="Stupka E."/>
            <person name="Sugiura K."/>
            <person name="Sultana R."/>
            <person name="Takenaka Y."/>
            <person name="Taki K."/>
            <person name="Tammoja K."/>
            <person name="Tan S.L."/>
            <person name="Tang S."/>
            <person name="Taylor M.S."/>
            <person name="Tegner J."/>
            <person name="Teichmann S.A."/>
            <person name="Ueda H.R."/>
            <person name="van Nimwegen E."/>
            <person name="Verardo R."/>
            <person name="Wei C.L."/>
            <person name="Yagi K."/>
            <person name="Yamanishi H."/>
            <person name="Zabarovsky E."/>
            <person name="Zhu S."/>
            <person name="Zimmer A."/>
            <person name="Hide W."/>
            <person name="Bult C."/>
            <person name="Grimmond S.M."/>
            <person name="Teasdale R.D."/>
            <person name="Liu E.T."/>
            <person name="Brusic V."/>
            <person name="Quackenbush J."/>
            <person name="Wahlestedt C."/>
            <person name="Mattick J.S."/>
            <person name="Hume D.A."/>
            <person name="Kai C."/>
            <person name="Sasaki D."/>
            <person name="Tomaru Y."/>
            <person name="Fukuda S."/>
            <person name="Kanamori-Katayama M."/>
            <person name="Suzuki M."/>
            <person name="Aoki J."/>
            <person name="Arakawa T."/>
            <person name="Iida J."/>
            <person name="Imamura K."/>
            <person name="Itoh M."/>
            <person name="Kato T."/>
            <person name="Kawaji H."/>
            <person name="Kawagashira N."/>
            <person name="Kawashima T."/>
            <person name="Kojima M."/>
            <person name="Kondo S."/>
            <person name="Konno H."/>
            <person name="Nakano K."/>
            <person name="Ninomiya N."/>
            <person name="Nishio T."/>
            <person name="Okada M."/>
            <person name="Plessy C."/>
            <person name="Shibata K."/>
            <person name="Shiraki T."/>
            <person name="Suzuki S."/>
            <person name="Tagami M."/>
            <person name="Waki K."/>
            <person name="Watahiki A."/>
            <person name="Okamura-Oho Y."/>
            <person name="Suzuki H."/>
            <person name="Kawai J."/>
            <person name="Hayashizaki Y."/>
        </authorList>
    </citation>
    <scope>NUCLEOTIDE SEQUENCE [LARGE SCALE MRNA]</scope>
    <source>
        <strain>C57BL/6J</strain>
        <tissue>Bone marrow</tissue>
        <tissue>Lung</tissue>
    </source>
</reference>
<reference key="4">
    <citation type="journal article" date="1995" name="J. Immunol.">
        <title>Multiple proteins physically interact with PU.1. Transcriptional synergy with NF-IL6 beta (C/EBP delta, CRP3).</title>
        <authorList>
            <person name="Nagulapalli S."/>
            <person name="Pongubala J.M."/>
            <person name="Atchison M.L."/>
        </authorList>
    </citation>
    <scope>INTERACTION WITH SPI1</scope>
    <scope>FUNCTION</scope>
    <scope>SUBCELLULAR LOCATION</scope>
</reference>
<reference key="5">
    <citation type="journal article" date="2009" name="Nature">
        <title>Initiation of myoblast to brown fat switch by a PRDM16-C/EBP-beta transcriptional complex.</title>
        <authorList>
            <person name="Kajimura S."/>
            <person name="Seale P."/>
            <person name="Kubota K."/>
            <person name="Lunsford E."/>
            <person name="Frangioni J.V."/>
            <person name="Gygi S.P."/>
            <person name="Spiegelman B.M."/>
        </authorList>
    </citation>
    <scope>INTERACTION WITH PRDM16</scope>
</reference>
<protein>
    <recommendedName>
        <fullName>CCAAT/enhancer-binding protein delta</fullName>
        <shortName>C/EBP delta</shortName>
    </recommendedName>
    <alternativeName>
        <fullName evidence="8">C/EBP-related protein 3</fullName>
    </alternativeName>
</protein>
<organism>
    <name type="scientific">Mus musculus</name>
    <name type="common">Mouse</name>
    <dbReference type="NCBI Taxonomy" id="10090"/>
    <lineage>
        <taxon>Eukaryota</taxon>
        <taxon>Metazoa</taxon>
        <taxon>Chordata</taxon>
        <taxon>Craniata</taxon>
        <taxon>Vertebrata</taxon>
        <taxon>Euteleostomi</taxon>
        <taxon>Mammalia</taxon>
        <taxon>Eutheria</taxon>
        <taxon>Euarchontoglires</taxon>
        <taxon>Glires</taxon>
        <taxon>Rodentia</taxon>
        <taxon>Myomorpha</taxon>
        <taxon>Muroidea</taxon>
        <taxon>Muridae</taxon>
        <taxon>Murinae</taxon>
        <taxon>Mus</taxon>
        <taxon>Mus</taxon>
    </lineage>
</organism>
<name>CEBPD_MOUSE</name>
<keyword id="KW-0007">Acetylation</keyword>
<keyword id="KW-0010">Activator</keyword>
<keyword id="KW-0238">DNA-binding</keyword>
<keyword id="KW-1017">Isopeptide bond</keyword>
<keyword id="KW-0539">Nucleus</keyword>
<keyword id="KW-1185">Reference proteome</keyword>
<keyword id="KW-0804">Transcription</keyword>
<keyword id="KW-0805">Transcription regulation</keyword>
<keyword id="KW-0832">Ubl conjugation</keyword>
<dbReference type="EMBL" id="X61800">
    <property type="protein sequence ID" value="CAA43905.1"/>
    <property type="molecule type" value="mRNA"/>
</dbReference>
<dbReference type="EMBL" id="M85144">
    <property type="status" value="NOT_ANNOTATED_CDS"/>
    <property type="molecule type" value="Genomic_DNA"/>
</dbReference>
<dbReference type="EMBL" id="AK053190">
    <property type="protein sequence ID" value="BAC35305.1"/>
    <property type="molecule type" value="mRNA"/>
</dbReference>
<dbReference type="EMBL" id="AK151958">
    <property type="protein sequence ID" value="BAE30830.1"/>
    <property type="molecule type" value="mRNA"/>
</dbReference>
<dbReference type="CCDS" id="CCDS84207.1"/>
<dbReference type="PIR" id="B37279">
    <property type="entry name" value="B37279"/>
</dbReference>
<dbReference type="RefSeq" id="NP_031705.3">
    <property type="nucleotide sequence ID" value="NM_007679.4"/>
</dbReference>
<dbReference type="SMR" id="Q00322"/>
<dbReference type="BioGRID" id="198670">
    <property type="interactions" value="8"/>
</dbReference>
<dbReference type="DIP" id="DIP-41645N"/>
<dbReference type="FunCoup" id="Q00322">
    <property type="interactions" value="1273"/>
</dbReference>
<dbReference type="IntAct" id="Q00322">
    <property type="interactions" value="4"/>
</dbReference>
<dbReference type="STRING" id="10090.ENSMUSP00000148145"/>
<dbReference type="GlyGen" id="Q00322">
    <property type="glycosylation" value="1 site"/>
</dbReference>
<dbReference type="iPTMnet" id="Q00322"/>
<dbReference type="PhosphoSitePlus" id="Q00322"/>
<dbReference type="ProteomicsDB" id="281459"/>
<dbReference type="Pumba" id="Q00322"/>
<dbReference type="Antibodypedia" id="24255">
    <property type="antibodies" value="254 antibodies from 29 providers"/>
</dbReference>
<dbReference type="DNASU" id="12609"/>
<dbReference type="Ensembl" id="ENSMUST00000096232.6">
    <property type="protein sequence ID" value="ENSMUSP00000148145.2"/>
    <property type="gene ID" value="ENSMUSG00000071637.6"/>
</dbReference>
<dbReference type="GeneID" id="12609"/>
<dbReference type="KEGG" id="mmu:12609"/>
<dbReference type="UCSC" id="uc007yhx.1">
    <property type="organism name" value="mouse"/>
</dbReference>
<dbReference type="AGR" id="MGI:103573"/>
<dbReference type="CTD" id="1052"/>
<dbReference type="MGI" id="MGI:103573">
    <property type="gene designation" value="Cebpd"/>
</dbReference>
<dbReference type="VEuPathDB" id="HostDB:ENSMUSG00000071637"/>
<dbReference type="GeneTree" id="ENSGT00940000163032"/>
<dbReference type="InParanoid" id="Q00322"/>
<dbReference type="OMA" id="RRNMEMQ"/>
<dbReference type="OrthoDB" id="10032067at2759"/>
<dbReference type="PhylomeDB" id="Q00322"/>
<dbReference type="BioGRID-ORCS" id="12609">
    <property type="hits" value="2 hits in 18 CRISPR screens"/>
</dbReference>
<dbReference type="ChiTaRS" id="Cebpd">
    <property type="organism name" value="mouse"/>
</dbReference>
<dbReference type="PRO" id="PR:Q00322"/>
<dbReference type="Proteomes" id="UP000000589">
    <property type="component" value="Chromosome 16"/>
</dbReference>
<dbReference type="RNAct" id="Q00322">
    <property type="molecule type" value="protein"/>
</dbReference>
<dbReference type="Bgee" id="ENSMUSG00000071637">
    <property type="expression patterns" value="Expressed in left lung lobe and 199 other cell types or tissues"/>
</dbReference>
<dbReference type="ExpressionAtlas" id="Q00322">
    <property type="expression patterns" value="baseline and differential"/>
</dbReference>
<dbReference type="GO" id="GO:0005654">
    <property type="term" value="C:nucleoplasm"/>
    <property type="evidence" value="ECO:0000304"/>
    <property type="project" value="Reactome"/>
</dbReference>
<dbReference type="GO" id="GO:0005634">
    <property type="term" value="C:nucleus"/>
    <property type="evidence" value="ECO:0000314"/>
    <property type="project" value="MGI"/>
</dbReference>
<dbReference type="GO" id="GO:0090575">
    <property type="term" value="C:RNA polymerase II transcription regulator complex"/>
    <property type="evidence" value="ECO:0007669"/>
    <property type="project" value="Ensembl"/>
</dbReference>
<dbReference type="GO" id="GO:0003677">
    <property type="term" value="F:DNA binding"/>
    <property type="evidence" value="ECO:0000314"/>
    <property type="project" value="MGI"/>
</dbReference>
<dbReference type="GO" id="GO:0001228">
    <property type="term" value="F:DNA-binding transcription activator activity, RNA polymerase II-specific"/>
    <property type="evidence" value="ECO:0000314"/>
    <property type="project" value="NTNU_SB"/>
</dbReference>
<dbReference type="GO" id="GO:0042802">
    <property type="term" value="F:identical protein binding"/>
    <property type="evidence" value="ECO:0000353"/>
    <property type="project" value="MGI"/>
</dbReference>
<dbReference type="GO" id="GO:0000978">
    <property type="term" value="F:RNA polymerase II cis-regulatory region sequence-specific DNA binding"/>
    <property type="evidence" value="ECO:0000314"/>
    <property type="project" value="NTNU_SB"/>
</dbReference>
<dbReference type="GO" id="GO:0000976">
    <property type="term" value="F:transcription cis-regulatory region binding"/>
    <property type="evidence" value="ECO:0000314"/>
    <property type="project" value="MGI"/>
</dbReference>
<dbReference type="GO" id="GO:0006351">
    <property type="term" value="P:DNA-templated transcription"/>
    <property type="evidence" value="ECO:0007669"/>
    <property type="project" value="InterPro"/>
</dbReference>
<dbReference type="GO" id="GO:0045444">
    <property type="term" value="P:fat cell differentiation"/>
    <property type="evidence" value="ECO:0000314"/>
    <property type="project" value="MGI"/>
</dbReference>
<dbReference type="GO" id="GO:0002244">
    <property type="term" value="P:hematopoietic progenitor cell differentiation"/>
    <property type="evidence" value="ECO:0000316"/>
    <property type="project" value="MGI"/>
</dbReference>
<dbReference type="GO" id="GO:0048839">
    <property type="term" value="P:inner ear development"/>
    <property type="evidence" value="ECO:0000314"/>
    <property type="project" value="MGI"/>
</dbReference>
<dbReference type="GO" id="GO:0045892">
    <property type="term" value="P:negative regulation of DNA-templated transcription"/>
    <property type="evidence" value="ECO:0000314"/>
    <property type="project" value="MGI"/>
</dbReference>
<dbReference type="GO" id="GO:0045669">
    <property type="term" value="P:positive regulation of osteoblast differentiation"/>
    <property type="evidence" value="ECO:0000314"/>
    <property type="project" value="MGI"/>
</dbReference>
<dbReference type="GO" id="GO:0045944">
    <property type="term" value="P:positive regulation of transcription by RNA polymerase II"/>
    <property type="evidence" value="ECO:0000314"/>
    <property type="project" value="NTNU_SB"/>
</dbReference>
<dbReference type="GO" id="GO:0006357">
    <property type="term" value="P:regulation of transcription by RNA polymerase II"/>
    <property type="evidence" value="ECO:0000314"/>
    <property type="project" value="MGI"/>
</dbReference>
<dbReference type="CDD" id="cd14714">
    <property type="entry name" value="bZIP_CEBPD"/>
    <property type="match status" value="1"/>
</dbReference>
<dbReference type="FunFam" id="1.20.5.170:FF:000028">
    <property type="entry name" value="CCAAT/enhancer-binding protein beta"/>
    <property type="match status" value="1"/>
</dbReference>
<dbReference type="Gene3D" id="1.20.5.170">
    <property type="match status" value="1"/>
</dbReference>
<dbReference type="InterPro" id="IPR004827">
    <property type="entry name" value="bZIP"/>
</dbReference>
<dbReference type="InterPro" id="IPR046347">
    <property type="entry name" value="bZIP_sf"/>
</dbReference>
<dbReference type="InterPro" id="IPR031106">
    <property type="entry name" value="C/EBP"/>
</dbReference>
<dbReference type="InterPro" id="IPR016468">
    <property type="entry name" value="C/EBP_chordates"/>
</dbReference>
<dbReference type="PANTHER" id="PTHR23334">
    <property type="entry name" value="CCAAT/ENHANCER BINDING PROTEIN"/>
    <property type="match status" value="1"/>
</dbReference>
<dbReference type="PANTHER" id="PTHR23334:SF3">
    <property type="entry name" value="CCAAT_ENHANCER-BINDING PROTEIN DELTA"/>
    <property type="match status" value="1"/>
</dbReference>
<dbReference type="Pfam" id="PF07716">
    <property type="entry name" value="bZIP_2"/>
    <property type="match status" value="1"/>
</dbReference>
<dbReference type="PIRSF" id="PIRSF005879">
    <property type="entry name" value="CCAAT/enhancer-binding"/>
    <property type="match status" value="1"/>
</dbReference>
<dbReference type="SMART" id="SM00338">
    <property type="entry name" value="BRLZ"/>
    <property type="match status" value="1"/>
</dbReference>
<dbReference type="SUPFAM" id="SSF57959">
    <property type="entry name" value="Leucine zipper domain"/>
    <property type="match status" value="1"/>
</dbReference>
<dbReference type="PROSITE" id="PS50217">
    <property type="entry name" value="BZIP"/>
    <property type="match status" value="1"/>
</dbReference>